<name>FERY3_MOUSE</name>
<gene>
    <name evidence="2" type="primary">Ferry3</name>
    <name type="synonym">D6Wsu163e</name>
</gene>
<evidence type="ECO:0000250" key="1">
    <source>
        <dbReference type="UniProtKB" id="D4A770"/>
    </source>
</evidence>
<evidence type="ECO:0000250" key="2">
    <source>
        <dbReference type="UniProtKB" id="Q9NQ89"/>
    </source>
</evidence>
<evidence type="ECO:0007744" key="3">
    <source>
    </source>
</evidence>
<sequence length="552" mass="63644">MKKNRERFCNKEREFVYKFQVGRERLELRVPLRFPVEENASHLHGRLMLLHSLPCFIESDLKDALSRFIEEESLRDHDSDAEACLEAVKSGEVDLHQLASAWAKAYAETTLEHARPEEPDWDEDFADVYHDLIHSPASETLLNLEHNYFVSISELIGERDVELKKLRERQGIEMEKVMQELGKSLTDQDVNSLAAQHFESQQDLENKWSNELKQSTAIQKQEYQEWVIKLHQDLKNPNNSSLSEEIKVQPSQFRESADAAGRIYEEQRKLEESFTIHLGAQLKTMHNLRLLRADMLDFCKHKRTHGSGVKLHRLQTALSLYSTSLCGLVLLVDNRINSYSGIKRDFATVCQECTDFHFPRIEEQLEVVQQVALYARTQRKSKCKEARDSGNQNGGSDDKSKNAERNYLNILPGEFYITRHSNLSEIHVAFHLCVDDNVKSGNITARDPAIMGLRNILKVCCTHDITTISIPLLLVHDMSEEMTIPWCLRRAELVFKCVKGFMMEMASWDGGISRTVQFLVPQSISEEMFYQLSNMLPQIFRVSSTLTLTSKH</sequence>
<reference key="1">
    <citation type="journal article" date="2005" name="Science">
        <title>The transcriptional landscape of the mammalian genome.</title>
        <authorList>
            <person name="Carninci P."/>
            <person name="Kasukawa T."/>
            <person name="Katayama S."/>
            <person name="Gough J."/>
            <person name="Frith M.C."/>
            <person name="Maeda N."/>
            <person name="Oyama R."/>
            <person name="Ravasi T."/>
            <person name="Lenhard B."/>
            <person name="Wells C."/>
            <person name="Kodzius R."/>
            <person name="Shimokawa K."/>
            <person name="Bajic V.B."/>
            <person name="Brenner S.E."/>
            <person name="Batalov S."/>
            <person name="Forrest A.R."/>
            <person name="Zavolan M."/>
            <person name="Davis M.J."/>
            <person name="Wilming L.G."/>
            <person name="Aidinis V."/>
            <person name="Allen J.E."/>
            <person name="Ambesi-Impiombato A."/>
            <person name="Apweiler R."/>
            <person name="Aturaliya R.N."/>
            <person name="Bailey T.L."/>
            <person name="Bansal M."/>
            <person name="Baxter L."/>
            <person name="Beisel K.W."/>
            <person name="Bersano T."/>
            <person name="Bono H."/>
            <person name="Chalk A.M."/>
            <person name="Chiu K.P."/>
            <person name="Choudhary V."/>
            <person name="Christoffels A."/>
            <person name="Clutterbuck D.R."/>
            <person name="Crowe M.L."/>
            <person name="Dalla E."/>
            <person name="Dalrymple B.P."/>
            <person name="de Bono B."/>
            <person name="Della Gatta G."/>
            <person name="di Bernardo D."/>
            <person name="Down T."/>
            <person name="Engstrom P."/>
            <person name="Fagiolini M."/>
            <person name="Faulkner G."/>
            <person name="Fletcher C.F."/>
            <person name="Fukushima T."/>
            <person name="Furuno M."/>
            <person name="Futaki S."/>
            <person name="Gariboldi M."/>
            <person name="Georgii-Hemming P."/>
            <person name="Gingeras T.R."/>
            <person name="Gojobori T."/>
            <person name="Green R.E."/>
            <person name="Gustincich S."/>
            <person name="Harbers M."/>
            <person name="Hayashi Y."/>
            <person name="Hensch T.K."/>
            <person name="Hirokawa N."/>
            <person name="Hill D."/>
            <person name="Huminiecki L."/>
            <person name="Iacono M."/>
            <person name="Ikeo K."/>
            <person name="Iwama A."/>
            <person name="Ishikawa T."/>
            <person name="Jakt M."/>
            <person name="Kanapin A."/>
            <person name="Katoh M."/>
            <person name="Kawasawa Y."/>
            <person name="Kelso J."/>
            <person name="Kitamura H."/>
            <person name="Kitano H."/>
            <person name="Kollias G."/>
            <person name="Krishnan S.P."/>
            <person name="Kruger A."/>
            <person name="Kummerfeld S.K."/>
            <person name="Kurochkin I.V."/>
            <person name="Lareau L.F."/>
            <person name="Lazarevic D."/>
            <person name="Lipovich L."/>
            <person name="Liu J."/>
            <person name="Liuni S."/>
            <person name="McWilliam S."/>
            <person name="Madan Babu M."/>
            <person name="Madera M."/>
            <person name="Marchionni L."/>
            <person name="Matsuda H."/>
            <person name="Matsuzawa S."/>
            <person name="Miki H."/>
            <person name="Mignone F."/>
            <person name="Miyake S."/>
            <person name="Morris K."/>
            <person name="Mottagui-Tabar S."/>
            <person name="Mulder N."/>
            <person name="Nakano N."/>
            <person name="Nakauchi H."/>
            <person name="Ng P."/>
            <person name="Nilsson R."/>
            <person name="Nishiguchi S."/>
            <person name="Nishikawa S."/>
            <person name="Nori F."/>
            <person name="Ohara O."/>
            <person name="Okazaki Y."/>
            <person name="Orlando V."/>
            <person name="Pang K.C."/>
            <person name="Pavan W.J."/>
            <person name="Pavesi G."/>
            <person name="Pesole G."/>
            <person name="Petrovsky N."/>
            <person name="Piazza S."/>
            <person name="Reed J."/>
            <person name="Reid J.F."/>
            <person name="Ring B.Z."/>
            <person name="Ringwald M."/>
            <person name="Rost B."/>
            <person name="Ruan Y."/>
            <person name="Salzberg S.L."/>
            <person name="Sandelin A."/>
            <person name="Schneider C."/>
            <person name="Schoenbach C."/>
            <person name="Sekiguchi K."/>
            <person name="Semple C.A."/>
            <person name="Seno S."/>
            <person name="Sessa L."/>
            <person name="Sheng Y."/>
            <person name="Shibata Y."/>
            <person name="Shimada H."/>
            <person name="Shimada K."/>
            <person name="Silva D."/>
            <person name="Sinclair B."/>
            <person name="Sperling S."/>
            <person name="Stupka E."/>
            <person name="Sugiura K."/>
            <person name="Sultana R."/>
            <person name="Takenaka Y."/>
            <person name="Taki K."/>
            <person name="Tammoja K."/>
            <person name="Tan S.L."/>
            <person name="Tang S."/>
            <person name="Taylor M.S."/>
            <person name="Tegner J."/>
            <person name="Teichmann S.A."/>
            <person name="Ueda H.R."/>
            <person name="van Nimwegen E."/>
            <person name="Verardo R."/>
            <person name="Wei C.L."/>
            <person name="Yagi K."/>
            <person name="Yamanishi H."/>
            <person name="Zabarovsky E."/>
            <person name="Zhu S."/>
            <person name="Zimmer A."/>
            <person name="Hide W."/>
            <person name="Bult C."/>
            <person name="Grimmond S.M."/>
            <person name="Teasdale R.D."/>
            <person name="Liu E.T."/>
            <person name="Brusic V."/>
            <person name="Quackenbush J."/>
            <person name="Wahlestedt C."/>
            <person name="Mattick J.S."/>
            <person name="Hume D.A."/>
            <person name="Kai C."/>
            <person name="Sasaki D."/>
            <person name="Tomaru Y."/>
            <person name="Fukuda S."/>
            <person name="Kanamori-Katayama M."/>
            <person name="Suzuki M."/>
            <person name="Aoki J."/>
            <person name="Arakawa T."/>
            <person name="Iida J."/>
            <person name="Imamura K."/>
            <person name="Itoh M."/>
            <person name="Kato T."/>
            <person name="Kawaji H."/>
            <person name="Kawagashira N."/>
            <person name="Kawashima T."/>
            <person name="Kojima M."/>
            <person name="Kondo S."/>
            <person name="Konno H."/>
            <person name="Nakano K."/>
            <person name="Ninomiya N."/>
            <person name="Nishio T."/>
            <person name="Okada M."/>
            <person name="Plessy C."/>
            <person name="Shibata K."/>
            <person name="Shiraki T."/>
            <person name="Suzuki S."/>
            <person name="Tagami M."/>
            <person name="Waki K."/>
            <person name="Watahiki A."/>
            <person name="Okamura-Oho Y."/>
            <person name="Suzuki H."/>
            <person name="Kawai J."/>
            <person name="Hayashizaki Y."/>
        </authorList>
    </citation>
    <scope>NUCLEOTIDE SEQUENCE [LARGE SCALE MRNA]</scope>
    <source>
        <strain>C57BL/6J</strain>
        <tissue>Adipose tissue</tissue>
        <tissue>Corpora quadrigemina</tissue>
        <tissue>Urinary bladder</tissue>
    </source>
</reference>
<reference key="2">
    <citation type="journal article" date="2004" name="Genome Res.">
        <title>The status, quality, and expansion of the NIH full-length cDNA project: the Mammalian Gene Collection (MGC).</title>
        <authorList>
            <consortium name="The MGC Project Team"/>
        </authorList>
    </citation>
    <scope>NUCLEOTIDE SEQUENCE [LARGE SCALE MRNA]</scope>
    <source>
        <strain>FVB/N</strain>
        <tissue>Mammary tumor</tissue>
    </source>
</reference>
<reference key="3">
    <citation type="journal article" date="2010" name="Cell">
        <title>A tissue-specific atlas of mouse protein phosphorylation and expression.</title>
        <authorList>
            <person name="Huttlin E.L."/>
            <person name="Jedrychowski M.P."/>
            <person name="Elias J.E."/>
            <person name="Goswami T."/>
            <person name="Rad R."/>
            <person name="Beausoleil S.A."/>
            <person name="Villen J."/>
            <person name="Haas W."/>
            <person name="Sowa M.E."/>
            <person name="Gygi S.P."/>
        </authorList>
    </citation>
    <scope>PHOSPHORYLATION [LARGE SCALE ANALYSIS] AT SER-79</scope>
    <scope>IDENTIFICATION BY MASS SPECTROMETRY [LARGE SCALE ANALYSIS]</scope>
    <source>
        <tissue>Brain</tissue>
        <tissue>Kidney</tissue>
        <tissue>Spleen</tissue>
        <tissue>Testis</tissue>
    </source>
</reference>
<feature type="chain" id="PRO_0000089843" description="FERRY endosomal RAB5 effector complex subunit 3">
    <location>
        <begin position="1"/>
        <end position="552"/>
    </location>
</feature>
<feature type="modified residue" description="Phosphoserine" evidence="3">
    <location>
        <position position="79"/>
    </location>
</feature>
<protein>
    <recommendedName>
        <fullName evidence="2">FERRY endosomal RAB5 effector complex subunit 3</fullName>
    </recommendedName>
</protein>
<dbReference type="EMBL" id="AK045541">
    <property type="protein sequence ID" value="BAC32412.1"/>
    <property type="molecule type" value="mRNA"/>
</dbReference>
<dbReference type="EMBL" id="AK046707">
    <property type="protein sequence ID" value="BAC32841.1"/>
    <property type="molecule type" value="mRNA"/>
</dbReference>
<dbReference type="EMBL" id="AK137201">
    <property type="protein sequence ID" value="BAE23265.1"/>
    <property type="molecule type" value="mRNA"/>
</dbReference>
<dbReference type="EMBL" id="BC016429">
    <property type="protein sequence ID" value="AAH16429.1"/>
    <property type="molecule type" value="mRNA"/>
</dbReference>
<dbReference type="CCDS" id="CCDS20560.1"/>
<dbReference type="RefSeq" id="NP_613060.1">
    <property type="nucleotide sequence ID" value="NM_138594.3"/>
</dbReference>
<dbReference type="RefSeq" id="XP_006506280.1">
    <property type="nucleotide sequence ID" value="XM_006506217.1"/>
</dbReference>
<dbReference type="SMR" id="Q91YN0"/>
<dbReference type="BioGRID" id="205730">
    <property type="interactions" value="1"/>
</dbReference>
<dbReference type="FunCoup" id="Q91YN0">
    <property type="interactions" value="3726"/>
</dbReference>
<dbReference type="STRING" id="10090.ENSMUSP00000032497"/>
<dbReference type="GlyGen" id="Q91YN0">
    <property type="glycosylation" value="2 sites, 2 N-linked glycans (2 sites)"/>
</dbReference>
<dbReference type="iPTMnet" id="Q91YN0"/>
<dbReference type="PhosphoSitePlus" id="Q91YN0"/>
<dbReference type="PaxDb" id="10090-ENSMUSP00000032497"/>
<dbReference type="PeptideAtlas" id="Q91YN0"/>
<dbReference type="ProteomicsDB" id="279094"/>
<dbReference type="Pumba" id="Q91YN0"/>
<dbReference type="Antibodypedia" id="41818">
    <property type="antibodies" value="84 antibodies from 15 providers"/>
</dbReference>
<dbReference type="Ensembl" id="ENSMUST00000032497.7">
    <property type="protein sequence ID" value="ENSMUSP00000032497.4"/>
    <property type="gene ID" value="ENSMUSG00000030347.7"/>
</dbReference>
<dbReference type="GeneID" id="28040"/>
<dbReference type="KEGG" id="mmu:28040"/>
<dbReference type="UCSC" id="uc009dvm.1">
    <property type="organism name" value="mouse"/>
</dbReference>
<dbReference type="AGR" id="MGI:107893"/>
<dbReference type="CTD" id="28040"/>
<dbReference type="MGI" id="MGI:107893">
    <property type="gene designation" value="D6Wsu163e"/>
</dbReference>
<dbReference type="VEuPathDB" id="HostDB:ENSMUSG00000030347"/>
<dbReference type="eggNOG" id="KOG4506">
    <property type="taxonomic scope" value="Eukaryota"/>
</dbReference>
<dbReference type="GeneTree" id="ENSGT00390000010229"/>
<dbReference type="HOGENOM" id="CLU_036084_0_0_1"/>
<dbReference type="InParanoid" id="Q91YN0"/>
<dbReference type="OMA" id="CKHKRSH"/>
<dbReference type="OrthoDB" id="415359at2759"/>
<dbReference type="PhylomeDB" id="Q91YN0"/>
<dbReference type="TreeFam" id="TF314243"/>
<dbReference type="BioGRID-ORCS" id="28040">
    <property type="hits" value="1 hit in 77 CRISPR screens"/>
</dbReference>
<dbReference type="ChiTaRS" id="D6Wsu163e">
    <property type="organism name" value="mouse"/>
</dbReference>
<dbReference type="PRO" id="PR:Q91YN0"/>
<dbReference type="Proteomes" id="UP000000589">
    <property type="component" value="Chromosome 6"/>
</dbReference>
<dbReference type="RNAct" id="Q91YN0">
    <property type="molecule type" value="protein"/>
</dbReference>
<dbReference type="Bgee" id="ENSMUSG00000030347">
    <property type="expression patterns" value="Expressed in saccule of membranous labyrinth and 245 other cell types or tissues"/>
</dbReference>
<dbReference type="ExpressionAtlas" id="Q91YN0">
    <property type="expression patterns" value="baseline and differential"/>
</dbReference>
<dbReference type="GO" id="GO:0005737">
    <property type="term" value="C:cytoplasm"/>
    <property type="evidence" value="ECO:0000250"/>
    <property type="project" value="UniProtKB"/>
</dbReference>
<dbReference type="GO" id="GO:0005769">
    <property type="term" value="C:early endosome"/>
    <property type="evidence" value="ECO:0000250"/>
    <property type="project" value="UniProtKB"/>
</dbReference>
<dbReference type="GO" id="GO:0032991">
    <property type="term" value="C:protein-containing complex"/>
    <property type="evidence" value="ECO:0007669"/>
    <property type="project" value="Ensembl"/>
</dbReference>
<dbReference type="GO" id="GO:0043304">
    <property type="term" value="P:regulation of mast cell degranulation"/>
    <property type="evidence" value="ECO:0000250"/>
    <property type="project" value="UniProtKB"/>
</dbReference>
<dbReference type="InterPro" id="IPR019311">
    <property type="entry name" value="Fy-3"/>
</dbReference>
<dbReference type="PANTHER" id="PTHR16525">
    <property type="entry name" value="PROTEIN C12ORF4"/>
    <property type="match status" value="1"/>
</dbReference>
<dbReference type="PANTHER" id="PTHR16525:SF0">
    <property type="entry name" value="PROTEIN C12ORF4"/>
    <property type="match status" value="1"/>
</dbReference>
<dbReference type="Pfam" id="PF10154">
    <property type="entry name" value="Fy-3"/>
    <property type="match status" value="1"/>
</dbReference>
<accession>Q91YN0</accession>
<accession>Q3UVK4</accession>
<keyword id="KW-0963">Cytoplasm</keyword>
<keyword id="KW-0967">Endosome</keyword>
<keyword id="KW-0597">Phosphoprotein</keyword>
<keyword id="KW-1185">Reference proteome</keyword>
<comment type="function">
    <text evidence="1 2">Component of the FERRY complex (Five-subunit Endosomal Rab5 and RNA/ribosome intermediary). The FERRY complex directly interacts with mRNAs and RAB5A, and functions as a RAB5A effector involved in the localization and the distribution of specific mRNAs most likely by mediating their endosomal transport. The complex recruits mRNAs and ribosomes to early endosomes through direct mRNA-interaction (By similarity). Plays a role in mast cell degranulation (By similarity).</text>
</comment>
<comment type="subunit">
    <text evidence="2">Component of the FERRY complex composed of five subunits, TBCK, PPP1R21, FERRY3, CRYZL1 and GATD1 with a ratio of 1:2:1:2:4, respectively.</text>
</comment>
<comment type="subcellular location">
    <subcellularLocation>
        <location evidence="1">Cytoplasm</location>
    </subcellularLocation>
    <subcellularLocation>
        <location evidence="2">Early endosome</location>
    </subcellularLocation>
</comment>
<organism>
    <name type="scientific">Mus musculus</name>
    <name type="common">Mouse</name>
    <dbReference type="NCBI Taxonomy" id="10090"/>
    <lineage>
        <taxon>Eukaryota</taxon>
        <taxon>Metazoa</taxon>
        <taxon>Chordata</taxon>
        <taxon>Craniata</taxon>
        <taxon>Vertebrata</taxon>
        <taxon>Euteleostomi</taxon>
        <taxon>Mammalia</taxon>
        <taxon>Eutheria</taxon>
        <taxon>Euarchontoglires</taxon>
        <taxon>Glires</taxon>
        <taxon>Rodentia</taxon>
        <taxon>Myomorpha</taxon>
        <taxon>Muroidea</taxon>
        <taxon>Muridae</taxon>
        <taxon>Murinae</taxon>
        <taxon>Mus</taxon>
        <taxon>Mus</taxon>
    </lineage>
</organism>
<proteinExistence type="evidence at protein level"/>